<comment type="function">
    <text evidence="1">Catalyzes the formation of S-adenosylmethionine (AdoMet) from methionine and ATP. The overall synthetic reaction is composed of two sequential steps, AdoMet formation and the subsequent tripolyphosphate hydrolysis which occurs prior to release of AdoMet from the enzyme.</text>
</comment>
<comment type="catalytic activity">
    <reaction evidence="1">
        <text>L-methionine + ATP + H2O = S-adenosyl-L-methionine + phosphate + diphosphate</text>
        <dbReference type="Rhea" id="RHEA:21080"/>
        <dbReference type="ChEBI" id="CHEBI:15377"/>
        <dbReference type="ChEBI" id="CHEBI:30616"/>
        <dbReference type="ChEBI" id="CHEBI:33019"/>
        <dbReference type="ChEBI" id="CHEBI:43474"/>
        <dbReference type="ChEBI" id="CHEBI:57844"/>
        <dbReference type="ChEBI" id="CHEBI:59789"/>
        <dbReference type="EC" id="2.5.1.6"/>
    </reaction>
</comment>
<comment type="cofactor">
    <cofactor evidence="1">
        <name>Mg(2+)</name>
        <dbReference type="ChEBI" id="CHEBI:18420"/>
    </cofactor>
    <text evidence="1">Binds 2 divalent ions per subunit.</text>
</comment>
<comment type="cofactor">
    <cofactor evidence="1">
        <name>K(+)</name>
        <dbReference type="ChEBI" id="CHEBI:29103"/>
    </cofactor>
    <text evidence="1">Binds 1 potassium ion per subunit.</text>
</comment>
<comment type="pathway">
    <text evidence="1">Amino-acid biosynthesis; S-adenosyl-L-methionine biosynthesis; S-adenosyl-L-methionine from L-methionine: step 1/1.</text>
</comment>
<comment type="subunit">
    <text evidence="1">Homotetramer; dimer of dimers.</text>
</comment>
<comment type="subcellular location">
    <subcellularLocation>
        <location evidence="1">Cytoplasm</location>
    </subcellularLocation>
</comment>
<comment type="similarity">
    <text evidence="1">Belongs to the AdoMet synthase family.</text>
</comment>
<gene>
    <name evidence="1" type="primary">metK</name>
    <name type="ordered locus">ACL_0328</name>
</gene>
<name>METK_ACHLI</name>
<evidence type="ECO:0000255" key="1">
    <source>
        <dbReference type="HAMAP-Rule" id="MF_00086"/>
    </source>
</evidence>
<keyword id="KW-0067">ATP-binding</keyword>
<keyword id="KW-0963">Cytoplasm</keyword>
<keyword id="KW-0460">Magnesium</keyword>
<keyword id="KW-0479">Metal-binding</keyword>
<keyword id="KW-0547">Nucleotide-binding</keyword>
<keyword id="KW-0554">One-carbon metabolism</keyword>
<keyword id="KW-0630">Potassium</keyword>
<keyword id="KW-1185">Reference proteome</keyword>
<keyword id="KW-0808">Transferase</keyword>
<accession>A9NF20</accession>
<feature type="chain" id="PRO_1000075365" description="S-adenosylmethionine synthase">
    <location>
        <begin position="1"/>
        <end position="386"/>
    </location>
</feature>
<feature type="region of interest" description="Flexible loop" evidence="1">
    <location>
        <begin position="101"/>
        <end position="111"/>
    </location>
</feature>
<feature type="binding site" description="in other chain" evidence="1">
    <location>
        <position position="14"/>
    </location>
    <ligand>
        <name>ATP</name>
        <dbReference type="ChEBI" id="CHEBI:30616"/>
        <note>ligand shared between two neighboring subunits</note>
    </ligand>
</feature>
<feature type="binding site" evidence="1">
    <location>
        <position position="16"/>
    </location>
    <ligand>
        <name>Mg(2+)</name>
        <dbReference type="ChEBI" id="CHEBI:18420"/>
    </ligand>
</feature>
<feature type="binding site" evidence="1">
    <location>
        <position position="42"/>
    </location>
    <ligand>
        <name>K(+)</name>
        <dbReference type="ChEBI" id="CHEBI:29103"/>
    </ligand>
</feature>
<feature type="binding site" description="in other chain" evidence="1">
    <location>
        <position position="55"/>
    </location>
    <ligand>
        <name>L-methionine</name>
        <dbReference type="ChEBI" id="CHEBI:57844"/>
        <note>ligand shared between two neighboring subunits</note>
    </ligand>
</feature>
<feature type="binding site" description="in other chain" evidence="1">
    <location>
        <position position="101"/>
    </location>
    <ligand>
        <name>L-methionine</name>
        <dbReference type="ChEBI" id="CHEBI:57844"/>
        <note>ligand shared between two neighboring subunits</note>
    </ligand>
</feature>
<feature type="binding site" description="in other chain" evidence="1">
    <location>
        <begin position="166"/>
        <end position="168"/>
    </location>
    <ligand>
        <name>ATP</name>
        <dbReference type="ChEBI" id="CHEBI:30616"/>
        <note>ligand shared between two neighboring subunits</note>
    </ligand>
</feature>
<feature type="binding site" description="in other chain" evidence="1">
    <location>
        <begin position="233"/>
        <end position="234"/>
    </location>
    <ligand>
        <name>ATP</name>
        <dbReference type="ChEBI" id="CHEBI:30616"/>
        <note>ligand shared between two neighboring subunits</note>
    </ligand>
</feature>
<feature type="binding site" evidence="1">
    <location>
        <position position="242"/>
    </location>
    <ligand>
        <name>ATP</name>
        <dbReference type="ChEBI" id="CHEBI:30616"/>
        <note>ligand shared between two neighboring subunits</note>
    </ligand>
</feature>
<feature type="binding site" evidence="1">
    <location>
        <position position="242"/>
    </location>
    <ligand>
        <name>L-methionine</name>
        <dbReference type="ChEBI" id="CHEBI:57844"/>
        <note>ligand shared between two neighboring subunits</note>
    </ligand>
</feature>
<feature type="binding site" description="in other chain" evidence="1">
    <location>
        <begin position="248"/>
        <end position="249"/>
    </location>
    <ligand>
        <name>ATP</name>
        <dbReference type="ChEBI" id="CHEBI:30616"/>
        <note>ligand shared between two neighboring subunits</note>
    </ligand>
</feature>
<feature type="binding site" evidence="1">
    <location>
        <position position="265"/>
    </location>
    <ligand>
        <name>ATP</name>
        <dbReference type="ChEBI" id="CHEBI:30616"/>
        <note>ligand shared between two neighboring subunits</note>
    </ligand>
</feature>
<feature type="binding site" evidence="1">
    <location>
        <position position="269"/>
    </location>
    <ligand>
        <name>ATP</name>
        <dbReference type="ChEBI" id="CHEBI:30616"/>
        <note>ligand shared between two neighboring subunits</note>
    </ligand>
</feature>
<feature type="binding site" description="in other chain" evidence="1">
    <location>
        <position position="273"/>
    </location>
    <ligand>
        <name>L-methionine</name>
        <dbReference type="ChEBI" id="CHEBI:57844"/>
        <note>ligand shared between two neighboring subunits</note>
    </ligand>
</feature>
<dbReference type="EC" id="2.5.1.6" evidence="1"/>
<dbReference type="EMBL" id="CP000896">
    <property type="protein sequence ID" value="ABX80950.1"/>
    <property type="molecule type" value="Genomic_DNA"/>
</dbReference>
<dbReference type="RefSeq" id="WP_012242281.1">
    <property type="nucleotide sequence ID" value="NC_010163.1"/>
</dbReference>
<dbReference type="SMR" id="A9NF20"/>
<dbReference type="STRING" id="441768.ACL_0328"/>
<dbReference type="GeneID" id="41338513"/>
<dbReference type="KEGG" id="acl:ACL_0328"/>
<dbReference type="eggNOG" id="COG0192">
    <property type="taxonomic scope" value="Bacteria"/>
</dbReference>
<dbReference type="HOGENOM" id="CLU_041802_1_1_14"/>
<dbReference type="OrthoDB" id="9801686at2"/>
<dbReference type="UniPathway" id="UPA00315">
    <property type="reaction ID" value="UER00080"/>
</dbReference>
<dbReference type="Proteomes" id="UP000008558">
    <property type="component" value="Chromosome"/>
</dbReference>
<dbReference type="GO" id="GO:0005737">
    <property type="term" value="C:cytoplasm"/>
    <property type="evidence" value="ECO:0007669"/>
    <property type="project" value="UniProtKB-SubCell"/>
</dbReference>
<dbReference type="GO" id="GO:0005524">
    <property type="term" value="F:ATP binding"/>
    <property type="evidence" value="ECO:0007669"/>
    <property type="project" value="UniProtKB-UniRule"/>
</dbReference>
<dbReference type="GO" id="GO:0000287">
    <property type="term" value="F:magnesium ion binding"/>
    <property type="evidence" value="ECO:0007669"/>
    <property type="project" value="UniProtKB-UniRule"/>
</dbReference>
<dbReference type="GO" id="GO:0004478">
    <property type="term" value="F:methionine adenosyltransferase activity"/>
    <property type="evidence" value="ECO:0007669"/>
    <property type="project" value="UniProtKB-UniRule"/>
</dbReference>
<dbReference type="GO" id="GO:0006730">
    <property type="term" value="P:one-carbon metabolic process"/>
    <property type="evidence" value="ECO:0007669"/>
    <property type="project" value="UniProtKB-KW"/>
</dbReference>
<dbReference type="GO" id="GO:0006556">
    <property type="term" value="P:S-adenosylmethionine biosynthetic process"/>
    <property type="evidence" value="ECO:0007669"/>
    <property type="project" value="UniProtKB-UniRule"/>
</dbReference>
<dbReference type="CDD" id="cd18079">
    <property type="entry name" value="S-AdoMet_synt"/>
    <property type="match status" value="1"/>
</dbReference>
<dbReference type="FunFam" id="3.30.300.10:FF:000003">
    <property type="entry name" value="S-adenosylmethionine synthase"/>
    <property type="match status" value="1"/>
</dbReference>
<dbReference type="Gene3D" id="3.30.300.10">
    <property type="match status" value="3"/>
</dbReference>
<dbReference type="HAMAP" id="MF_00086">
    <property type="entry name" value="S_AdoMet_synth1"/>
    <property type="match status" value="1"/>
</dbReference>
<dbReference type="InterPro" id="IPR022631">
    <property type="entry name" value="ADOMET_SYNTHASE_CS"/>
</dbReference>
<dbReference type="InterPro" id="IPR022630">
    <property type="entry name" value="S-AdoMet_synt_C"/>
</dbReference>
<dbReference type="InterPro" id="IPR022629">
    <property type="entry name" value="S-AdoMet_synt_central"/>
</dbReference>
<dbReference type="InterPro" id="IPR022628">
    <property type="entry name" value="S-AdoMet_synt_N"/>
</dbReference>
<dbReference type="InterPro" id="IPR002133">
    <property type="entry name" value="S-AdoMet_synthetase"/>
</dbReference>
<dbReference type="InterPro" id="IPR022636">
    <property type="entry name" value="S-AdoMet_synthetase_sfam"/>
</dbReference>
<dbReference type="NCBIfam" id="TIGR01034">
    <property type="entry name" value="metK"/>
    <property type="match status" value="1"/>
</dbReference>
<dbReference type="PANTHER" id="PTHR11964">
    <property type="entry name" value="S-ADENOSYLMETHIONINE SYNTHETASE"/>
    <property type="match status" value="1"/>
</dbReference>
<dbReference type="Pfam" id="PF02773">
    <property type="entry name" value="S-AdoMet_synt_C"/>
    <property type="match status" value="1"/>
</dbReference>
<dbReference type="Pfam" id="PF02772">
    <property type="entry name" value="S-AdoMet_synt_M"/>
    <property type="match status" value="1"/>
</dbReference>
<dbReference type="Pfam" id="PF00438">
    <property type="entry name" value="S-AdoMet_synt_N"/>
    <property type="match status" value="1"/>
</dbReference>
<dbReference type="PIRSF" id="PIRSF000497">
    <property type="entry name" value="MAT"/>
    <property type="match status" value="1"/>
</dbReference>
<dbReference type="SUPFAM" id="SSF55973">
    <property type="entry name" value="S-adenosylmethionine synthetase"/>
    <property type="match status" value="3"/>
</dbReference>
<dbReference type="PROSITE" id="PS00376">
    <property type="entry name" value="ADOMET_SYNTHASE_1"/>
    <property type="match status" value="1"/>
</dbReference>
<dbReference type="PROSITE" id="PS00377">
    <property type="entry name" value="ADOMET_SYNTHASE_2"/>
    <property type="match status" value="1"/>
</dbReference>
<reference key="1">
    <citation type="journal article" date="2011" name="J. Bacteriol.">
        <title>Complete genome and proteome of Acholeplasma laidlawii.</title>
        <authorList>
            <person name="Lazarev V.N."/>
            <person name="Levitskii S.A."/>
            <person name="Basovskii Y.I."/>
            <person name="Chukin M.M."/>
            <person name="Akopian T.A."/>
            <person name="Vereshchagin V.V."/>
            <person name="Kostrjukova E.S."/>
            <person name="Kovaleva G.Y."/>
            <person name="Kazanov M.D."/>
            <person name="Malko D.B."/>
            <person name="Vitreschak A.G."/>
            <person name="Sernova N.V."/>
            <person name="Gelfand M.S."/>
            <person name="Demina I.A."/>
            <person name="Serebryakova M.V."/>
            <person name="Galyamina M.A."/>
            <person name="Vtyurin N.N."/>
            <person name="Rogov S.I."/>
            <person name="Alexeev D.G."/>
            <person name="Ladygina V.G."/>
            <person name="Govorun V.M."/>
        </authorList>
    </citation>
    <scope>NUCLEOTIDE SEQUENCE [LARGE SCALE GENOMIC DNA]</scope>
    <source>
        <strain>PG-8A</strain>
    </source>
</reference>
<organism>
    <name type="scientific">Acholeplasma laidlawii (strain PG-8A)</name>
    <dbReference type="NCBI Taxonomy" id="441768"/>
    <lineage>
        <taxon>Bacteria</taxon>
        <taxon>Bacillati</taxon>
        <taxon>Mycoplasmatota</taxon>
        <taxon>Mollicutes</taxon>
        <taxon>Acholeplasmatales</taxon>
        <taxon>Acholeplasmataceae</taxon>
        <taxon>Acholeplasma</taxon>
    </lineage>
</organism>
<protein>
    <recommendedName>
        <fullName evidence="1">S-adenosylmethionine synthase</fullName>
        <shortName evidence="1">AdoMet synthase</shortName>
        <ecNumber evidence="1">2.5.1.6</ecNumber>
    </recommendedName>
    <alternativeName>
        <fullName evidence="1">MAT</fullName>
    </alternativeName>
    <alternativeName>
        <fullName evidence="1">Methionine adenosyltransferase</fullName>
    </alternativeName>
</protein>
<proteinExistence type="inferred from homology"/>
<sequence>MSYIFSSESVSKGHPDKVADFIADSVLDLVLKNDPKARCAIEVALAHTTVYIFGEVSTSYILTDEIIIETAKKAIDFCGYNDEKFIFDAKSATYHVNIHKQSADIALGVDETDNKEQGAGDQGIMFGYAKDDTKELLPLPIFLAHELTKRLAFVREEGIVSGLGPDGKSQVSVLYNENHEPLEVTAIVLSTQHEASKTLESVKADMMKHVILEVIPKHLITDNTKYYINPTGRFVIGGPVGDSGLTGRKLIVDTYGGYSRHGGGAFSGKDASKVDRSASYMARYLAKQVVGSGIAKTCEIQLAYAIGVAEPVSLYVNTFGTSKVSNEVIAETISKHFDLRPKAIINYLGLTNPIFKQTTHNGHFGKLESNLSWEKLDKIEIFEQLV</sequence>